<feature type="chain" id="PRO_0000451339" description="Polyprenyl transferase subC">
    <location>
        <begin position="1"/>
        <end position="109"/>
    </location>
</feature>
<feature type="transmembrane region" description="Helical" evidence="2">
    <location>
        <begin position="39"/>
        <end position="59"/>
    </location>
</feature>
<feature type="transmembrane region" description="Helical" evidence="2">
    <location>
        <begin position="84"/>
        <end position="104"/>
    </location>
</feature>
<comment type="function">
    <text evidence="3 7 8">Polyprenyl transferase; part of the gene cluster that mediates the biosynthesis of the immunosuppressants subglutinols, meroterpenoids consisting of an alpha-pyrone (4-hydroxy-5,6-dimethyl-2-pyrone) moiety attached to a decalin core fused to a five-membered cyclic ether carrying a prenylside chain (PubMed:27189118). The first step of the pathway is the synthesis of the alpha-pyrone moiety by the polyketide synthase subA via condensation of one acetyl-CoA starter unit with 3 malonyl-CoA units and 2 methylations (PubMed:27189118). The alpha-pyrone is then combined with geranylgeranyl pyrophosphate (GGPP) formed by the GGPP synthase subD through the action of the prenyltransferase subC to yield a linear alpha-pyrone diterpenoid (PubMed:27189118). Subsequent steps in the subglutinol biosynthetic pathway involve the decalin core formation, which is thought to be initiated by the epoxidation of the C10-C11 olefin by the FAD-dependent oxidoreductase subE (Probable). The following cyclization cascade would be catalyzed by the terpene cyclase subB (Probable). Lastly, the FAD-dependent dehydrogenase subF probably catalyzes the five-membered cyclic ether formation to complete the formation of subglutinol A (Probable). Subsequent redox reactions appear to give rise to subglutinol C and D, however, it remains unclear which enzymes are responsible for these transformations (Probable). SubD may have secondary function in the conversion of the identified subglutinols to subglutinol analog 45, which seems to be the major product of the cluster (PubMed:34863012).</text>
</comment>
<comment type="cofactor">
    <cofactor evidence="1">
        <name>Mg(2+)</name>
        <dbReference type="ChEBI" id="CHEBI:18420"/>
    </cofactor>
</comment>
<comment type="pathway">
    <text evidence="3">Secondary metabolite biosynthesis; terpenoid biosynthesis.</text>
</comment>
<comment type="subcellular location">
    <subcellularLocation>
        <location evidence="2">Membrane</location>
        <topology evidence="2">Multi-pass membrane protein</topology>
    </subcellularLocation>
</comment>
<comment type="induction">
    <text evidence="4">The subglutinol cluster is highly expressed when mycelia and hyphae are transferred to fresh media for a 3 hour induction period, remaining expressed under conditions of heat shock (PubMed:34863012). The cluster is repressed in cultures reaching stationary phase or in early germinating cultures, as well as under conditions of UV, salt and oxidative stress (PubMed:34863012).</text>
</comment>
<comment type="similarity">
    <text evidence="6">Belongs to the UbiA prenyltransferase family.</text>
</comment>
<sequence length="109" mass="11862">MPTSANKVETAWSALLAGAAETRQEHLAPSPLFILRQTLFCVLAAYLFCGAGMVWNDWIDRDIDANVARTKNRPLASGKVTTAQAFVWMALQVIASCAVLHVMLDGKDV</sequence>
<name>SUBC_METRA</name>
<organism>
    <name type="scientific">Metarhizium robertsii (strain ARSEF 23 / ATCC MYA-3075)</name>
    <name type="common">Metarhizium anisopliae (strain ARSEF 23)</name>
    <dbReference type="NCBI Taxonomy" id="655844"/>
    <lineage>
        <taxon>Eukaryota</taxon>
        <taxon>Fungi</taxon>
        <taxon>Dikarya</taxon>
        <taxon>Ascomycota</taxon>
        <taxon>Pezizomycotina</taxon>
        <taxon>Sordariomycetes</taxon>
        <taxon>Hypocreomycetidae</taxon>
        <taxon>Hypocreales</taxon>
        <taxon>Clavicipitaceae</taxon>
        <taxon>Metarhizium</taxon>
    </lineage>
</organism>
<accession>A0A0B2XGM8</accession>
<keyword id="KW-0472">Membrane</keyword>
<keyword id="KW-0808">Transferase</keyword>
<keyword id="KW-0812">Transmembrane</keyword>
<keyword id="KW-1133">Transmembrane helix</keyword>
<reference key="1">
    <citation type="journal article" date="2011" name="PLoS Genet.">
        <title>Genome sequencing and comparative transcriptomics of the model entomopathogenic fungi Metarhizium anisopliae and M. acridum.</title>
        <authorList>
            <person name="Gao Q."/>
            <person name="Jin K."/>
            <person name="Ying S.-H."/>
            <person name="Zhang Y."/>
            <person name="Xiao G."/>
            <person name="Shang Y."/>
            <person name="Duan Z."/>
            <person name="Hu X."/>
            <person name="Xie X.-Q."/>
            <person name="Zhou G."/>
            <person name="Peng G."/>
            <person name="Luo Z."/>
            <person name="Huang W."/>
            <person name="Wang B."/>
            <person name="Fang W."/>
            <person name="Wang S."/>
            <person name="Zhong Y."/>
            <person name="Ma L.-J."/>
            <person name="St Leger R.J."/>
            <person name="Zhao G.-P."/>
            <person name="Pei Y."/>
            <person name="Feng M.-G."/>
            <person name="Xia Y."/>
            <person name="Wang C."/>
        </authorList>
    </citation>
    <scope>NUCLEOTIDE SEQUENCE [LARGE SCALE GENOMIC DNA]</scope>
    <source>
        <strain>ARSEF 23 / ATCC MYA-3075</strain>
    </source>
</reference>
<reference key="2">
    <citation type="journal article" date="2014" name="Proc. Natl. Acad. Sci. U.S.A.">
        <title>Trajectory and genomic determinants of fungal-pathogen speciation and host adaptation.</title>
        <authorList>
            <person name="Hu X."/>
            <person name="Xiao G."/>
            <person name="Zheng P."/>
            <person name="Shang Y."/>
            <person name="Su Y."/>
            <person name="Zhang X."/>
            <person name="Liu X."/>
            <person name="Zhan S."/>
            <person name="St Leger R.J."/>
            <person name="Wang C."/>
        </authorList>
    </citation>
    <scope>GENOME REANNOTATION</scope>
    <source>
        <strain>ARSEF 23 / ATCC MYA-3075</strain>
    </source>
</reference>
<reference key="3">
    <citation type="journal article" date="2016" name="J. Antibiot.">
        <title>New natural products isolated from Metarhizium robertsii ARSEF 23 by chemical screening and identification of the gene cluster through engineered biosynthesis in Aspergillus nidulans A1145.</title>
        <authorList>
            <person name="Kato H."/>
            <person name="Tsunematsu Y."/>
            <person name="Yamamoto T."/>
            <person name="Namiki T."/>
            <person name="Kishimoto S."/>
            <person name="Noguchi H."/>
            <person name="Watanabe K."/>
        </authorList>
    </citation>
    <scope>FUNCTION</scope>
    <scope>CATALYTIC ACTIVITY</scope>
    <scope>PATHWAY</scope>
</reference>
<reference key="4">
    <citation type="journal article" date="2022" name="Environ. Microbiol.">
        <title>Mutation of a prenyltransferase results in accumulation of subglutinols and destruxins and enhanced virulence in the insect pathogen, Metarhizium anisopliae.</title>
        <authorList>
            <person name="Li C."/>
            <person name="Huang W."/>
            <person name="Zhou T."/>
            <person name="Zhao Q."/>
            <person name="Huang P."/>
            <person name="Qi P."/>
            <person name="Huang S."/>
            <person name="Huang S."/>
            <person name="Keyhani N.O."/>
            <person name="Huang Z."/>
        </authorList>
    </citation>
    <scope>FUNCTION</scope>
    <scope>INDUCTION</scope>
</reference>
<protein>
    <recommendedName>
        <fullName evidence="5">Polyprenyl transferase subC</fullName>
        <ecNumber evidence="3">2.5.1.-</ecNumber>
    </recommendedName>
    <alternativeName>
        <fullName evidence="5">Subglutinol biosynthesis cluster protein C</fullName>
    </alternativeName>
</protein>
<proteinExistence type="evidence at protein level"/>
<dbReference type="EC" id="2.5.1.-" evidence="3"/>
<dbReference type="EMBL" id="ADNJ02000014">
    <property type="protein sequence ID" value="KHO10692.1"/>
    <property type="molecule type" value="Genomic_DNA"/>
</dbReference>
<dbReference type="RefSeq" id="XP_011410913.1">
    <property type="nucleotide sequence ID" value="XM_011412611.1"/>
</dbReference>
<dbReference type="SMR" id="A0A0B2XGM8"/>
<dbReference type="GeneID" id="23633144"/>
<dbReference type="KEGG" id="maj:MAA_11696"/>
<dbReference type="HOGENOM" id="CLU_147528_0_0_1"/>
<dbReference type="OrthoDB" id="18170at2759"/>
<dbReference type="UniPathway" id="UPA00213"/>
<dbReference type="Proteomes" id="UP000002498">
    <property type="component" value="Unassembled WGS sequence"/>
</dbReference>
<dbReference type="GO" id="GO:0005886">
    <property type="term" value="C:plasma membrane"/>
    <property type="evidence" value="ECO:0007669"/>
    <property type="project" value="TreeGrafter"/>
</dbReference>
<dbReference type="GO" id="GO:0016765">
    <property type="term" value="F:transferase activity, transferring alkyl or aryl (other than methyl) groups"/>
    <property type="evidence" value="ECO:0007669"/>
    <property type="project" value="InterPro"/>
</dbReference>
<dbReference type="GO" id="GO:0016114">
    <property type="term" value="P:terpenoid biosynthetic process"/>
    <property type="evidence" value="ECO:0007669"/>
    <property type="project" value="UniProtKB-UniPathway"/>
</dbReference>
<dbReference type="Gene3D" id="1.10.357.140">
    <property type="entry name" value="UbiA prenyltransferase"/>
    <property type="match status" value="1"/>
</dbReference>
<dbReference type="InterPro" id="IPR039653">
    <property type="entry name" value="Prenyltransferase"/>
</dbReference>
<dbReference type="InterPro" id="IPR000537">
    <property type="entry name" value="UbiA_prenyltransferase"/>
</dbReference>
<dbReference type="InterPro" id="IPR030470">
    <property type="entry name" value="UbiA_prenylTrfase_CS"/>
</dbReference>
<dbReference type="InterPro" id="IPR044878">
    <property type="entry name" value="UbiA_sf"/>
</dbReference>
<dbReference type="PANTHER" id="PTHR11048:SF28">
    <property type="entry name" value="4-HYDROXYBENZOATE POLYPRENYLTRANSFERASE, MITOCHONDRIAL"/>
    <property type="match status" value="1"/>
</dbReference>
<dbReference type="PANTHER" id="PTHR11048">
    <property type="entry name" value="PRENYLTRANSFERASES"/>
    <property type="match status" value="1"/>
</dbReference>
<dbReference type="Pfam" id="PF01040">
    <property type="entry name" value="UbiA"/>
    <property type="match status" value="1"/>
</dbReference>
<dbReference type="PROSITE" id="PS00943">
    <property type="entry name" value="UBIA"/>
    <property type="match status" value="1"/>
</dbReference>
<gene>
    <name evidence="5" type="primary">subC</name>
    <name type="ORF">MAA_11696</name>
</gene>
<evidence type="ECO:0000250" key="1">
    <source>
        <dbReference type="UniProtKB" id="P32378"/>
    </source>
</evidence>
<evidence type="ECO:0000255" key="2"/>
<evidence type="ECO:0000269" key="3">
    <source>
    </source>
</evidence>
<evidence type="ECO:0000269" key="4">
    <source>
    </source>
</evidence>
<evidence type="ECO:0000303" key="5">
    <source>
    </source>
</evidence>
<evidence type="ECO:0000305" key="6"/>
<evidence type="ECO:0000305" key="7">
    <source>
    </source>
</evidence>
<evidence type="ECO:0000305" key="8">
    <source>
    </source>
</evidence>